<protein>
    <recommendedName>
        <fullName evidence="1">Type III pantothenate kinase</fullName>
        <ecNumber evidence="1">2.7.1.33</ecNumber>
    </recommendedName>
    <alternativeName>
        <fullName evidence="1">PanK-III</fullName>
    </alternativeName>
    <alternativeName>
        <fullName evidence="1">Pantothenic acid kinase</fullName>
    </alternativeName>
</protein>
<sequence>METSKPGCGLALDNDKQKPWLGLMIGNSRLHWAYCSGNAPLQTWVTDYNPKSAQLPVLLGKVPLMLASVVPEQTEVWRVYQPKILTLKNLPLVNLYPSFGIDRALAGLGTGLTYGFPCLVVDGGTALTITGFDQDKKLVGGAILPGLGLQLATLGDRLAALPKLEMDQLTELPDRWALDTPSAIFSGVVYGVLGALQSYLQDWQKLFPGAAMVITGGDGKILHGFLKEHSPNLSVAWDDNLIFLGMAAIHHGDRPIC</sequence>
<reference key="1">
    <citation type="journal article" date="1996" name="DNA Res.">
        <title>Sequence analysis of the genome of the unicellular cyanobacterium Synechocystis sp. strain PCC6803. II. Sequence determination of the entire genome and assignment of potential protein-coding regions.</title>
        <authorList>
            <person name="Kaneko T."/>
            <person name="Sato S."/>
            <person name="Kotani H."/>
            <person name="Tanaka A."/>
            <person name="Asamizu E."/>
            <person name="Nakamura Y."/>
            <person name="Miyajima N."/>
            <person name="Hirosawa M."/>
            <person name="Sugiura M."/>
            <person name="Sasamoto S."/>
            <person name="Kimura T."/>
            <person name="Hosouchi T."/>
            <person name="Matsuno A."/>
            <person name="Muraki A."/>
            <person name="Nakazaki N."/>
            <person name="Naruo K."/>
            <person name="Okumura S."/>
            <person name="Shimpo S."/>
            <person name="Takeuchi C."/>
            <person name="Wada T."/>
            <person name="Watanabe A."/>
            <person name="Yamada M."/>
            <person name="Yasuda M."/>
            <person name="Tabata S."/>
        </authorList>
    </citation>
    <scope>NUCLEOTIDE SEQUENCE [LARGE SCALE GENOMIC DNA]</scope>
    <source>
        <strain>ATCC 27184 / PCC 6803 / Kazusa</strain>
    </source>
</reference>
<feature type="chain" id="PRO_0000270905" description="Type III pantothenate kinase">
    <location>
        <begin position="1"/>
        <end position="257"/>
    </location>
</feature>
<feature type="active site" description="Proton acceptor" evidence="1">
    <location>
        <position position="102"/>
    </location>
</feature>
<feature type="binding site" evidence="1">
    <location>
        <begin position="24"/>
        <end position="31"/>
    </location>
    <ligand>
        <name>ATP</name>
        <dbReference type="ChEBI" id="CHEBI:30616"/>
    </ligand>
</feature>
<feature type="binding site" evidence="1">
    <location>
        <position position="96"/>
    </location>
    <ligand>
        <name>substrate</name>
    </ligand>
</feature>
<feature type="binding site" evidence="1">
    <location>
        <begin position="100"/>
        <end position="103"/>
    </location>
    <ligand>
        <name>substrate</name>
    </ligand>
</feature>
<feature type="binding site" evidence="1">
    <location>
        <position position="122"/>
    </location>
    <ligand>
        <name>K(+)</name>
        <dbReference type="ChEBI" id="CHEBI:29103"/>
    </ligand>
</feature>
<feature type="binding site" evidence="1">
    <location>
        <position position="125"/>
    </location>
    <ligand>
        <name>ATP</name>
        <dbReference type="ChEBI" id="CHEBI:30616"/>
    </ligand>
</feature>
<feature type="binding site" evidence="1">
    <location>
        <position position="180"/>
    </location>
    <ligand>
        <name>substrate</name>
    </ligand>
</feature>
<accession>P74045</accession>
<comment type="function">
    <text evidence="1">Catalyzes the phosphorylation of pantothenate (Pan), the first step in CoA biosynthesis.</text>
</comment>
<comment type="catalytic activity">
    <reaction evidence="1">
        <text>(R)-pantothenate + ATP = (R)-4'-phosphopantothenate + ADP + H(+)</text>
        <dbReference type="Rhea" id="RHEA:16373"/>
        <dbReference type="ChEBI" id="CHEBI:10986"/>
        <dbReference type="ChEBI" id="CHEBI:15378"/>
        <dbReference type="ChEBI" id="CHEBI:29032"/>
        <dbReference type="ChEBI" id="CHEBI:30616"/>
        <dbReference type="ChEBI" id="CHEBI:456216"/>
        <dbReference type="EC" id="2.7.1.33"/>
    </reaction>
</comment>
<comment type="cofactor">
    <cofactor evidence="1">
        <name>NH4(+)</name>
        <dbReference type="ChEBI" id="CHEBI:28938"/>
    </cofactor>
    <cofactor evidence="1">
        <name>K(+)</name>
        <dbReference type="ChEBI" id="CHEBI:29103"/>
    </cofactor>
    <text evidence="1">A monovalent cation. Ammonium or potassium.</text>
</comment>
<comment type="pathway">
    <text evidence="1">Cofactor biosynthesis; coenzyme A biosynthesis; CoA from (R)-pantothenate: step 1/5.</text>
</comment>
<comment type="subunit">
    <text evidence="1">Homodimer.</text>
</comment>
<comment type="subcellular location">
    <subcellularLocation>
        <location evidence="1">Cytoplasm</location>
    </subcellularLocation>
</comment>
<comment type="similarity">
    <text evidence="1">Belongs to the type III pantothenate kinase family.</text>
</comment>
<dbReference type="EC" id="2.7.1.33" evidence="1"/>
<dbReference type="EMBL" id="BA000022">
    <property type="protein sequence ID" value="BAA18120.1"/>
    <property type="molecule type" value="Genomic_DNA"/>
</dbReference>
<dbReference type="PIR" id="S75559">
    <property type="entry name" value="S75559"/>
</dbReference>
<dbReference type="SMR" id="P74045"/>
<dbReference type="IntAct" id="P74045">
    <property type="interactions" value="1"/>
</dbReference>
<dbReference type="STRING" id="1148.gene:10498991"/>
<dbReference type="PaxDb" id="1148-1653204"/>
<dbReference type="EnsemblBacteria" id="BAA18120">
    <property type="protein sequence ID" value="BAA18120"/>
    <property type="gene ID" value="BAA18120"/>
</dbReference>
<dbReference type="KEGG" id="syn:slr0812"/>
<dbReference type="eggNOG" id="COG1521">
    <property type="taxonomic scope" value="Bacteria"/>
</dbReference>
<dbReference type="InParanoid" id="P74045"/>
<dbReference type="PhylomeDB" id="P74045"/>
<dbReference type="UniPathway" id="UPA00241">
    <property type="reaction ID" value="UER00352"/>
</dbReference>
<dbReference type="Proteomes" id="UP000001425">
    <property type="component" value="Chromosome"/>
</dbReference>
<dbReference type="GO" id="GO:0005737">
    <property type="term" value="C:cytoplasm"/>
    <property type="evidence" value="ECO:0007669"/>
    <property type="project" value="UniProtKB-SubCell"/>
</dbReference>
<dbReference type="GO" id="GO:0005524">
    <property type="term" value="F:ATP binding"/>
    <property type="evidence" value="ECO:0007669"/>
    <property type="project" value="UniProtKB-UniRule"/>
</dbReference>
<dbReference type="GO" id="GO:0046872">
    <property type="term" value="F:metal ion binding"/>
    <property type="evidence" value="ECO:0007669"/>
    <property type="project" value="UniProtKB-KW"/>
</dbReference>
<dbReference type="GO" id="GO:0004594">
    <property type="term" value="F:pantothenate kinase activity"/>
    <property type="evidence" value="ECO:0007669"/>
    <property type="project" value="UniProtKB-UniRule"/>
</dbReference>
<dbReference type="GO" id="GO:0015937">
    <property type="term" value="P:coenzyme A biosynthetic process"/>
    <property type="evidence" value="ECO:0007669"/>
    <property type="project" value="UniProtKB-UniRule"/>
</dbReference>
<dbReference type="CDD" id="cd24015">
    <property type="entry name" value="ASKHA_NBD_PanK-III"/>
    <property type="match status" value="1"/>
</dbReference>
<dbReference type="Gene3D" id="3.30.420.40">
    <property type="match status" value="1"/>
</dbReference>
<dbReference type="HAMAP" id="MF_01274">
    <property type="entry name" value="Pantothen_kinase_3"/>
    <property type="match status" value="1"/>
</dbReference>
<dbReference type="InterPro" id="IPR043129">
    <property type="entry name" value="ATPase_NBD"/>
</dbReference>
<dbReference type="InterPro" id="IPR004619">
    <property type="entry name" value="Type_III_PanK"/>
</dbReference>
<dbReference type="NCBIfam" id="TIGR00671">
    <property type="entry name" value="baf"/>
    <property type="match status" value="1"/>
</dbReference>
<dbReference type="NCBIfam" id="NF009871">
    <property type="entry name" value="PRK13331.1"/>
    <property type="match status" value="1"/>
</dbReference>
<dbReference type="PANTHER" id="PTHR34265">
    <property type="entry name" value="TYPE III PANTOTHENATE KINASE"/>
    <property type="match status" value="1"/>
</dbReference>
<dbReference type="PANTHER" id="PTHR34265:SF1">
    <property type="entry name" value="TYPE III PANTOTHENATE KINASE"/>
    <property type="match status" value="1"/>
</dbReference>
<dbReference type="Pfam" id="PF03309">
    <property type="entry name" value="Pan_kinase"/>
    <property type="match status" value="1"/>
</dbReference>
<dbReference type="SUPFAM" id="SSF53067">
    <property type="entry name" value="Actin-like ATPase domain"/>
    <property type="match status" value="1"/>
</dbReference>
<proteinExistence type="inferred from homology"/>
<organism>
    <name type="scientific">Synechocystis sp. (strain ATCC 27184 / PCC 6803 / Kazusa)</name>
    <dbReference type="NCBI Taxonomy" id="1111708"/>
    <lineage>
        <taxon>Bacteria</taxon>
        <taxon>Bacillati</taxon>
        <taxon>Cyanobacteriota</taxon>
        <taxon>Cyanophyceae</taxon>
        <taxon>Synechococcales</taxon>
        <taxon>Merismopediaceae</taxon>
        <taxon>Synechocystis</taxon>
    </lineage>
</organism>
<keyword id="KW-0067">ATP-binding</keyword>
<keyword id="KW-0173">Coenzyme A biosynthesis</keyword>
<keyword id="KW-0963">Cytoplasm</keyword>
<keyword id="KW-0418">Kinase</keyword>
<keyword id="KW-0479">Metal-binding</keyword>
<keyword id="KW-0547">Nucleotide-binding</keyword>
<keyword id="KW-0630">Potassium</keyword>
<keyword id="KW-1185">Reference proteome</keyword>
<keyword id="KW-0808">Transferase</keyword>
<name>COAX_SYNY3</name>
<gene>
    <name evidence="1" type="primary">coaX</name>
    <name type="ordered locus">slr0812</name>
</gene>
<evidence type="ECO:0000255" key="1">
    <source>
        <dbReference type="HAMAP-Rule" id="MF_01274"/>
    </source>
</evidence>